<geneLocation type="chloroplast"/>
<name>PSBN_CRUWA</name>
<protein>
    <recommendedName>
        <fullName evidence="1">Protein PsbN</fullName>
    </recommendedName>
</protein>
<feature type="chain" id="PRO_0000362185" description="Protein PsbN">
    <location>
        <begin position="1"/>
        <end position="43"/>
    </location>
</feature>
<feature type="transmembrane region" description="Helical" evidence="1">
    <location>
        <begin position="7"/>
        <end position="27"/>
    </location>
</feature>
<organism>
    <name type="scientific">Crucihimalaya wallichii</name>
    <name type="common">Rock-cress</name>
    <name type="synonym">Arabidopsis campestris</name>
    <dbReference type="NCBI Taxonomy" id="78192"/>
    <lineage>
        <taxon>Eukaryota</taxon>
        <taxon>Viridiplantae</taxon>
        <taxon>Streptophyta</taxon>
        <taxon>Embryophyta</taxon>
        <taxon>Tracheophyta</taxon>
        <taxon>Spermatophyta</taxon>
        <taxon>Magnoliopsida</taxon>
        <taxon>eudicotyledons</taxon>
        <taxon>Gunneridae</taxon>
        <taxon>Pentapetalae</taxon>
        <taxon>rosids</taxon>
        <taxon>malvids</taxon>
        <taxon>Brassicales</taxon>
        <taxon>Brassicaceae</taxon>
        <taxon>Crucihimalayeae</taxon>
        <taxon>Crucihimalaya</taxon>
    </lineage>
</organism>
<keyword id="KW-0150">Chloroplast</keyword>
<keyword id="KW-0472">Membrane</keyword>
<keyword id="KW-0934">Plastid</keyword>
<keyword id="KW-0793">Thylakoid</keyword>
<keyword id="KW-0812">Transmembrane</keyword>
<keyword id="KW-1133">Transmembrane helix</keyword>
<sequence length="43" mass="4722">METATLVAIFISGLLVSFTGYALYTAFGQPSQQLRDPFEEHGD</sequence>
<reference key="1">
    <citation type="submission" date="2007-03" db="EMBL/GenBank/DDBJ databases">
        <title>Sequencing analysis of Crucihimalaya wallichii chloroplast DNA.</title>
        <authorList>
            <person name="Hosouchi T."/>
            <person name="Tsuruoka H."/>
            <person name="Kotani H."/>
        </authorList>
    </citation>
    <scope>NUCLEOTIDE SEQUENCE [LARGE SCALE GENOMIC DNA]</scope>
</reference>
<gene>
    <name evidence="1" type="primary">psbN</name>
</gene>
<accession>A4QKV9</accession>
<comment type="function">
    <text evidence="1">May play a role in photosystem I and II biogenesis.</text>
</comment>
<comment type="subcellular location">
    <subcellularLocation>
        <location evidence="1">Plastid</location>
        <location evidence="1">Chloroplast thylakoid membrane</location>
        <topology evidence="1">Single-pass membrane protein</topology>
    </subcellularLocation>
</comment>
<comment type="similarity">
    <text evidence="1">Belongs to the PsbN family.</text>
</comment>
<comment type="caution">
    <text evidence="1">Originally thought to be a component of PSII; based on experiments in Synechocystis, N.tabacum and barley, and its absence from PSII in T.elongatus and T.vulcanus, this is probably not true.</text>
</comment>
<proteinExistence type="inferred from homology"/>
<dbReference type="EMBL" id="AP009372">
    <property type="protein sequence ID" value="BAF50314.1"/>
    <property type="molecule type" value="Genomic_DNA"/>
</dbReference>
<dbReference type="RefSeq" id="YP_001123490.1">
    <property type="nucleotide sequence ID" value="NC_009271.1"/>
</dbReference>
<dbReference type="SMR" id="A4QKV9"/>
<dbReference type="GeneID" id="4962644"/>
<dbReference type="GO" id="GO:0009535">
    <property type="term" value="C:chloroplast thylakoid membrane"/>
    <property type="evidence" value="ECO:0007669"/>
    <property type="project" value="UniProtKB-SubCell"/>
</dbReference>
<dbReference type="GO" id="GO:0015979">
    <property type="term" value="P:photosynthesis"/>
    <property type="evidence" value="ECO:0007669"/>
    <property type="project" value="InterPro"/>
</dbReference>
<dbReference type="HAMAP" id="MF_00293">
    <property type="entry name" value="PSII_PsbN"/>
    <property type="match status" value="1"/>
</dbReference>
<dbReference type="InterPro" id="IPR003398">
    <property type="entry name" value="PSII_PsbN"/>
</dbReference>
<dbReference type="PANTHER" id="PTHR35326">
    <property type="entry name" value="PROTEIN PSBN"/>
    <property type="match status" value="1"/>
</dbReference>
<dbReference type="PANTHER" id="PTHR35326:SF3">
    <property type="entry name" value="PROTEIN PSBN"/>
    <property type="match status" value="1"/>
</dbReference>
<dbReference type="Pfam" id="PF02468">
    <property type="entry name" value="PsbN"/>
    <property type="match status" value="1"/>
</dbReference>
<evidence type="ECO:0000255" key="1">
    <source>
        <dbReference type="HAMAP-Rule" id="MF_00293"/>
    </source>
</evidence>